<sequence>MHTLKTLVLMVFLSVFFIFVGSLIGGKQGATFALIMALGMNFFAYFFSHKIVLAMYGAKEVSEAEAPELYNIVRRLAQKAELPMPKVYIIDSEQPNAFATGRSPKHGVVAVTTGIMRILSREELEGVIGHELAHIKHRDILISTIAATIAGAISYLAQMAMWANIFGGRHDDEEGGGHPIVALLMMIIAPLIAMIIQLAISRSREYAADEDGARIAGNPLYLSNALRKLHYASQAIPMDANPGTAHMFIVNPLSGKTLMKLFSTHPPIDERIARLEAMARRY</sequence>
<reference key="1">
    <citation type="submission" date="2008-08" db="EMBL/GenBank/DDBJ databases">
        <title>The complete genome sequence of Thermodesulfovibrio yellowstonii strain ATCC 51303 / DSM 11347 / YP87.</title>
        <authorList>
            <person name="Dodson R.J."/>
            <person name="Durkin A.S."/>
            <person name="Wu M."/>
            <person name="Eisen J."/>
            <person name="Sutton G."/>
        </authorList>
    </citation>
    <scope>NUCLEOTIDE SEQUENCE [LARGE SCALE GENOMIC DNA]</scope>
    <source>
        <strain>ATCC 51303 / DSM 11347 / YP87</strain>
    </source>
</reference>
<name>HTPX_THEYD</name>
<feature type="chain" id="PRO_1000098856" description="Protease HtpX homolog">
    <location>
        <begin position="1"/>
        <end position="282"/>
    </location>
</feature>
<feature type="transmembrane region" description="Helical" evidence="1">
    <location>
        <begin position="6"/>
        <end position="26"/>
    </location>
</feature>
<feature type="transmembrane region" description="Helical" evidence="1">
    <location>
        <begin position="29"/>
        <end position="49"/>
    </location>
</feature>
<feature type="transmembrane region" description="Helical" evidence="1">
    <location>
        <begin position="140"/>
        <end position="160"/>
    </location>
</feature>
<feature type="transmembrane region" description="Helical" evidence="1">
    <location>
        <begin position="180"/>
        <end position="200"/>
    </location>
</feature>
<feature type="active site" evidence="1">
    <location>
        <position position="131"/>
    </location>
</feature>
<feature type="binding site" evidence="1">
    <location>
        <position position="130"/>
    </location>
    <ligand>
        <name>Zn(2+)</name>
        <dbReference type="ChEBI" id="CHEBI:29105"/>
        <note>catalytic</note>
    </ligand>
</feature>
<feature type="binding site" evidence="1">
    <location>
        <position position="134"/>
    </location>
    <ligand>
        <name>Zn(2+)</name>
        <dbReference type="ChEBI" id="CHEBI:29105"/>
        <note>catalytic</note>
    </ligand>
</feature>
<feature type="binding site" evidence="1">
    <location>
        <position position="205"/>
    </location>
    <ligand>
        <name>Zn(2+)</name>
        <dbReference type="ChEBI" id="CHEBI:29105"/>
        <note>catalytic</note>
    </ligand>
</feature>
<dbReference type="EC" id="3.4.24.-" evidence="1"/>
<dbReference type="EMBL" id="CP001147">
    <property type="protein sequence ID" value="ACI20817.1"/>
    <property type="molecule type" value="Genomic_DNA"/>
</dbReference>
<dbReference type="RefSeq" id="WP_012545548.1">
    <property type="nucleotide sequence ID" value="NC_011296.1"/>
</dbReference>
<dbReference type="RefSeq" id="YP_002248793.1">
    <property type="nucleotide sequence ID" value="NC_011296.1"/>
</dbReference>
<dbReference type="FunCoup" id="B5YKM8">
    <property type="interactions" value="238"/>
</dbReference>
<dbReference type="STRING" id="289376.THEYE_A0960"/>
<dbReference type="EnsemblBacteria" id="ACI20817">
    <property type="protein sequence ID" value="ACI20817"/>
    <property type="gene ID" value="THEYE_A0960"/>
</dbReference>
<dbReference type="KEGG" id="tye:THEYE_A0960"/>
<dbReference type="PATRIC" id="fig|289376.4.peg.943"/>
<dbReference type="eggNOG" id="COG0501">
    <property type="taxonomic scope" value="Bacteria"/>
</dbReference>
<dbReference type="HOGENOM" id="CLU_042266_3_0_0"/>
<dbReference type="InParanoid" id="B5YKM8"/>
<dbReference type="OrthoDB" id="15218at2"/>
<dbReference type="Proteomes" id="UP000000718">
    <property type="component" value="Chromosome"/>
</dbReference>
<dbReference type="GO" id="GO:0005886">
    <property type="term" value="C:plasma membrane"/>
    <property type="evidence" value="ECO:0007669"/>
    <property type="project" value="UniProtKB-SubCell"/>
</dbReference>
<dbReference type="GO" id="GO:0004222">
    <property type="term" value="F:metalloendopeptidase activity"/>
    <property type="evidence" value="ECO:0007669"/>
    <property type="project" value="UniProtKB-UniRule"/>
</dbReference>
<dbReference type="GO" id="GO:0008270">
    <property type="term" value="F:zinc ion binding"/>
    <property type="evidence" value="ECO:0007669"/>
    <property type="project" value="UniProtKB-UniRule"/>
</dbReference>
<dbReference type="GO" id="GO:0006508">
    <property type="term" value="P:proteolysis"/>
    <property type="evidence" value="ECO:0007669"/>
    <property type="project" value="UniProtKB-KW"/>
</dbReference>
<dbReference type="CDD" id="cd07336">
    <property type="entry name" value="M48B_HtpX_like"/>
    <property type="match status" value="1"/>
</dbReference>
<dbReference type="Gene3D" id="3.30.2010.10">
    <property type="entry name" value="Metalloproteases ('zincins'), catalytic domain"/>
    <property type="match status" value="1"/>
</dbReference>
<dbReference type="HAMAP" id="MF_00188">
    <property type="entry name" value="Pept_M48_protease_HtpX"/>
    <property type="match status" value="1"/>
</dbReference>
<dbReference type="InterPro" id="IPR050083">
    <property type="entry name" value="HtpX_protease"/>
</dbReference>
<dbReference type="InterPro" id="IPR022919">
    <property type="entry name" value="Pept_M48_protease_HtpX"/>
</dbReference>
<dbReference type="InterPro" id="IPR001915">
    <property type="entry name" value="Peptidase_M48"/>
</dbReference>
<dbReference type="NCBIfam" id="NF002826">
    <property type="entry name" value="PRK03001.1"/>
    <property type="match status" value="1"/>
</dbReference>
<dbReference type="PANTHER" id="PTHR43221">
    <property type="entry name" value="PROTEASE HTPX"/>
    <property type="match status" value="1"/>
</dbReference>
<dbReference type="PANTHER" id="PTHR43221:SF1">
    <property type="entry name" value="PROTEASE HTPX"/>
    <property type="match status" value="1"/>
</dbReference>
<dbReference type="Pfam" id="PF01435">
    <property type="entry name" value="Peptidase_M48"/>
    <property type="match status" value="1"/>
</dbReference>
<gene>
    <name evidence="1" type="primary">htpX</name>
    <name type="ordered locus">THEYE_A0960</name>
</gene>
<organism>
    <name type="scientific">Thermodesulfovibrio yellowstonii (strain ATCC 51303 / DSM 11347 / YP87)</name>
    <dbReference type="NCBI Taxonomy" id="289376"/>
    <lineage>
        <taxon>Bacteria</taxon>
        <taxon>Pseudomonadati</taxon>
        <taxon>Nitrospirota</taxon>
        <taxon>Thermodesulfovibrionia</taxon>
        <taxon>Thermodesulfovibrionales</taxon>
        <taxon>Thermodesulfovibrionaceae</taxon>
        <taxon>Thermodesulfovibrio</taxon>
    </lineage>
</organism>
<accession>B5YKM8</accession>
<protein>
    <recommendedName>
        <fullName evidence="1">Protease HtpX homolog</fullName>
        <ecNumber evidence="1">3.4.24.-</ecNumber>
    </recommendedName>
</protein>
<proteinExistence type="inferred from homology"/>
<evidence type="ECO:0000255" key="1">
    <source>
        <dbReference type="HAMAP-Rule" id="MF_00188"/>
    </source>
</evidence>
<keyword id="KW-0997">Cell inner membrane</keyword>
<keyword id="KW-1003">Cell membrane</keyword>
<keyword id="KW-0378">Hydrolase</keyword>
<keyword id="KW-0472">Membrane</keyword>
<keyword id="KW-0479">Metal-binding</keyword>
<keyword id="KW-0482">Metalloprotease</keyword>
<keyword id="KW-0645">Protease</keyword>
<keyword id="KW-1185">Reference proteome</keyword>
<keyword id="KW-0812">Transmembrane</keyword>
<keyword id="KW-1133">Transmembrane helix</keyword>
<keyword id="KW-0862">Zinc</keyword>
<comment type="cofactor">
    <cofactor evidence="1">
        <name>Zn(2+)</name>
        <dbReference type="ChEBI" id="CHEBI:29105"/>
    </cofactor>
    <text evidence="1">Binds 1 zinc ion per subunit.</text>
</comment>
<comment type="subcellular location">
    <subcellularLocation>
        <location evidence="1">Cell inner membrane</location>
        <topology evidence="1">Multi-pass membrane protein</topology>
    </subcellularLocation>
</comment>
<comment type="similarity">
    <text evidence="1">Belongs to the peptidase M48B family.</text>
</comment>